<proteinExistence type="inferred from homology"/>
<accession>C1F697</accession>
<comment type="function">
    <text evidence="2">One of the essential components for the initiation of protein synthesis. Protects formylmethionyl-tRNA from spontaneous hydrolysis and promotes its binding to the 30S ribosomal subunits. Also involved in the hydrolysis of GTP during the formation of the 70S ribosomal complex.</text>
</comment>
<comment type="subcellular location">
    <subcellularLocation>
        <location evidence="2">Cytoplasm</location>
    </subcellularLocation>
</comment>
<comment type="similarity">
    <text evidence="2">Belongs to the TRAFAC class translation factor GTPase superfamily. Classic translation factor GTPase family. IF-2 subfamily.</text>
</comment>
<dbReference type="EMBL" id="CP001472">
    <property type="protein sequence ID" value="ACO31565.1"/>
    <property type="molecule type" value="Genomic_DNA"/>
</dbReference>
<dbReference type="RefSeq" id="WP_015898360.1">
    <property type="nucleotide sequence ID" value="NC_012483.1"/>
</dbReference>
<dbReference type="SMR" id="C1F697"/>
<dbReference type="FunCoup" id="C1F697">
    <property type="interactions" value="584"/>
</dbReference>
<dbReference type="STRING" id="240015.ACP_3327"/>
<dbReference type="KEGG" id="aca:ACP_3327"/>
<dbReference type="eggNOG" id="COG0532">
    <property type="taxonomic scope" value="Bacteria"/>
</dbReference>
<dbReference type="HOGENOM" id="CLU_006301_5_1_0"/>
<dbReference type="InParanoid" id="C1F697"/>
<dbReference type="OrthoDB" id="9811804at2"/>
<dbReference type="Proteomes" id="UP000002207">
    <property type="component" value="Chromosome"/>
</dbReference>
<dbReference type="GO" id="GO:0005829">
    <property type="term" value="C:cytosol"/>
    <property type="evidence" value="ECO:0007669"/>
    <property type="project" value="TreeGrafter"/>
</dbReference>
<dbReference type="GO" id="GO:0005525">
    <property type="term" value="F:GTP binding"/>
    <property type="evidence" value="ECO:0007669"/>
    <property type="project" value="UniProtKB-KW"/>
</dbReference>
<dbReference type="GO" id="GO:0003924">
    <property type="term" value="F:GTPase activity"/>
    <property type="evidence" value="ECO:0007669"/>
    <property type="project" value="UniProtKB-UniRule"/>
</dbReference>
<dbReference type="GO" id="GO:0003743">
    <property type="term" value="F:translation initiation factor activity"/>
    <property type="evidence" value="ECO:0007669"/>
    <property type="project" value="UniProtKB-UniRule"/>
</dbReference>
<dbReference type="CDD" id="cd01887">
    <property type="entry name" value="IF2_eIF5B"/>
    <property type="match status" value="1"/>
</dbReference>
<dbReference type="CDD" id="cd03702">
    <property type="entry name" value="IF2_mtIF2_II"/>
    <property type="match status" value="1"/>
</dbReference>
<dbReference type="CDD" id="cd03692">
    <property type="entry name" value="mtIF2_IVc"/>
    <property type="match status" value="1"/>
</dbReference>
<dbReference type="FunFam" id="2.40.30.10:FF:000007">
    <property type="entry name" value="Translation initiation factor IF-2"/>
    <property type="match status" value="1"/>
</dbReference>
<dbReference type="FunFam" id="2.40.30.10:FF:000008">
    <property type="entry name" value="Translation initiation factor IF-2"/>
    <property type="match status" value="1"/>
</dbReference>
<dbReference type="FunFam" id="3.40.50.10050:FF:000001">
    <property type="entry name" value="Translation initiation factor IF-2"/>
    <property type="match status" value="1"/>
</dbReference>
<dbReference type="FunFam" id="3.40.50.300:FF:000019">
    <property type="entry name" value="Translation initiation factor IF-2"/>
    <property type="match status" value="1"/>
</dbReference>
<dbReference type="Gene3D" id="1.10.10.2480">
    <property type="match status" value="1"/>
</dbReference>
<dbReference type="Gene3D" id="3.40.50.300">
    <property type="entry name" value="P-loop containing nucleotide triphosphate hydrolases"/>
    <property type="match status" value="1"/>
</dbReference>
<dbReference type="Gene3D" id="2.40.30.10">
    <property type="entry name" value="Translation factors"/>
    <property type="match status" value="2"/>
</dbReference>
<dbReference type="Gene3D" id="3.40.50.10050">
    <property type="entry name" value="Translation initiation factor IF- 2, domain 3"/>
    <property type="match status" value="1"/>
</dbReference>
<dbReference type="HAMAP" id="MF_00100_B">
    <property type="entry name" value="IF_2_B"/>
    <property type="match status" value="1"/>
</dbReference>
<dbReference type="InterPro" id="IPR053905">
    <property type="entry name" value="EF-G-like_DII"/>
</dbReference>
<dbReference type="InterPro" id="IPR004161">
    <property type="entry name" value="EFTu-like_2"/>
</dbReference>
<dbReference type="InterPro" id="IPR044145">
    <property type="entry name" value="IF2_II"/>
</dbReference>
<dbReference type="InterPro" id="IPR006847">
    <property type="entry name" value="IF2_N"/>
</dbReference>
<dbReference type="InterPro" id="IPR027417">
    <property type="entry name" value="P-loop_NTPase"/>
</dbReference>
<dbReference type="InterPro" id="IPR005225">
    <property type="entry name" value="Small_GTP-bd"/>
</dbReference>
<dbReference type="InterPro" id="IPR000795">
    <property type="entry name" value="T_Tr_GTP-bd_dom"/>
</dbReference>
<dbReference type="InterPro" id="IPR000178">
    <property type="entry name" value="TF_IF2_bacterial-like"/>
</dbReference>
<dbReference type="InterPro" id="IPR015760">
    <property type="entry name" value="TIF_IF2"/>
</dbReference>
<dbReference type="InterPro" id="IPR023115">
    <property type="entry name" value="TIF_IF2_dom3"/>
</dbReference>
<dbReference type="InterPro" id="IPR036925">
    <property type="entry name" value="TIF_IF2_dom3_sf"/>
</dbReference>
<dbReference type="InterPro" id="IPR009000">
    <property type="entry name" value="Transl_B-barrel_sf"/>
</dbReference>
<dbReference type="NCBIfam" id="TIGR00487">
    <property type="entry name" value="IF-2"/>
    <property type="match status" value="1"/>
</dbReference>
<dbReference type="NCBIfam" id="TIGR00231">
    <property type="entry name" value="small_GTP"/>
    <property type="match status" value="1"/>
</dbReference>
<dbReference type="PANTHER" id="PTHR43381:SF5">
    <property type="entry name" value="TR-TYPE G DOMAIN-CONTAINING PROTEIN"/>
    <property type="match status" value="1"/>
</dbReference>
<dbReference type="PANTHER" id="PTHR43381">
    <property type="entry name" value="TRANSLATION INITIATION FACTOR IF-2-RELATED"/>
    <property type="match status" value="1"/>
</dbReference>
<dbReference type="Pfam" id="PF22042">
    <property type="entry name" value="EF-G_D2"/>
    <property type="match status" value="1"/>
</dbReference>
<dbReference type="Pfam" id="PF00009">
    <property type="entry name" value="GTP_EFTU"/>
    <property type="match status" value="1"/>
</dbReference>
<dbReference type="Pfam" id="PF03144">
    <property type="entry name" value="GTP_EFTU_D2"/>
    <property type="match status" value="1"/>
</dbReference>
<dbReference type="Pfam" id="PF11987">
    <property type="entry name" value="IF-2"/>
    <property type="match status" value="1"/>
</dbReference>
<dbReference type="Pfam" id="PF04760">
    <property type="entry name" value="IF2_N"/>
    <property type="match status" value="2"/>
</dbReference>
<dbReference type="PRINTS" id="PR00315">
    <property type="entry name" value="ELONGATNFCT"/>
</dbReference>
<dbReference type="SUPFAM" id="SSF52156">
    <property type="entry name" value="Initiation factor IF2/eIF5b, domain 3"/>
    <property type="match status" value="1"/>
</dbReference>
<dbReference type="SUPFAM" id="SSF52540">
    <property type="entry name" value="P-loop containing nucleoside triphosphate hydrolases"/>
    <property type="match status" value="1"/>
</dbReference>
<dbReference type="SUPFAM" id="SSF50447">
    <property type="entry name" value="Translation proteins"/>
    <property type="match status" value="2"/>
</dbReference>
<dbReference type="PROSITE" id="PS51722">
    <property type="entry name" value="G_TR_2"/>
    <property type="match status" value="1"/>
</dbReference>
<dbReference type="PROSITE" id="PS01176">
    <property type="entry name" value="IF2"/>
    <property type="match status" value="1"/>
</dbReference>
<feature type="chain" id="PRO_1000202762" description="Translation initiation factor IF-2">
    <location>
        <begin position="1"/>
        <end position="1061"/>
    </location>
</feature>
<feature type="domain" description="tr-type G">
    <location>
        <begin position="552"/>
        <end position="728"/>
    </location>
</feature>
<feature type="region of interest" description="Disordered" evidence="3">
    <location>
        <begin position="51"/>
        <end position="199"/>
    </location>
</feature>
<feature type="region of interest" description="Disordered" evidence="3">
    <location>
        <begin position="250"/>
        <end position="460"/>
    </location>
</feature>
<feature type="region of interest" description="G1" evidence="1">
    <location>
        <begin position="561"/>
        <end position="568"/>
    </location>
</feature>
<feature type="region of interest" description="G2" evidence="1">
    <location>
        <begin position="586"/>
        <end position="590"/>
    </location>
</feature>
<feature type="region of interest" description="G3" evidence="1">
    <location>
        <begin position="614"/>
        <end position="617"/>
    </location>
</feature>
<feature type="region of interest" description="G4" evidence="1">
    <location>
        <begin position="668"/>
        <end position="671"/>
    </location>
</feature>
<feature type="region of interest" description="G5" evidence="1">
    <location>
        <begin position="704"/>
        <end position="706"/>
    </location>
</feature>
<feature type="compositionally biased region" description="Basic and acidic residues" evidence="3">
    <location>
        <begin position="67"/>
        <end position="77"/>
    </location>
</feature>
<feature type="compositionally biased region" description="Low complexity" evidence="3">
    <location>
        <begin position="97"/>
        <end position="113"/>
    </location>
</feature>
<feature type="compositionally biased region" description="Low complexity" evidence="3">
    <location>
        <begin position="120"/>
        <end position="130"/>
    </location>
</feature>
<feature type="compositionally biased region" description="Low complexity" evidence="3">
    <location>
        <begin position="167"/>
        <end position="177"/>
    </location>
</feature>
<feature type="compositionally biased region" description="Low complexity" evidence="3">
    <location>
        <begin position="184"/>
        <end position="199"/>
    </location>
</feature>
<feature type="compositionally biased region" description="Low complexity" evidence="3">
    <location>
        <begin position="250"/>
        <end position="278"/>
    </location>
</feature>
<feature type="compositionally biased region" description="Pro residues" evidence="3">
    <location>
        <begin position="279"/>
        <end position="291"/>
    </location>
</feature>
<feature type="compositionally biased region" description="Gly residues" evidence="3">
    <location>
        <begin position="340"/>
        <end position="360"/>
    </location>
</feature>
<feature type="compositionally biased region" description="Low complexity" evidence="3">
    <location>
        <begin position="381"/>
        <end position="391"/>
    </location>
</feature>
<feature type="compositionally biased region" description="Gly residues" evidence="3">
    <location>
        <begin position="392"/>
        <end position="405"/>
    </location>
</feature>
<feature type="binding site" evidence="2">
    <location>
        <begin position="561"/>
        <end position="568"/>
    </location>
    <ligand>
        <name>GTP</name>
        <dbReference type="ChEBI" id="CHEBI:37565"/>
    </ligand>
</feature>
<feature type="binding site" evidence="2">
    <location>
        <begin position="614"/>
        <end position="618"/>
    </location>
    <ligand>
        <name>GTP</name>
        <dbReference type="ChEBI" id="CHEBI:37565"/>
    </ligand>
</feature>
<feature type="binding site" evidence="2">
    <location>
        <begin position="668"/>
        <end position="671"/>
    </location>
    <ligand>
        <name>GTP</name>
        <dbReference type="ChEBI" id="CHEBI:37565"/>
    </ligand>
</feature>
<sequence length="1061" mass="111261">MSKVRINDLARELEVKSKAILDALADCGVTEKKTHSSSLEADEAVRVRAHFARGSRGAGQGGSRQQNEPKPKIDWSRVSKPGDVLKAIQERNEQETVAAARPAAVPVAPKAPVSAPPAARPSAPRPAVTAAPPPVAARPAGVQPGSQPAVSVQHGAEAQKPAPRRIVPQPRQPSAVVAPPPAATPAIAARPPAAPVAVKPPVTTAPIAQQEKPAAPAAQEVKSALATGPSVPVAVSPSVVVAAAPPPATAFQAPAAPAAPAASQSAPQEAKTPAAEAPPVAPEKPAVPAPPQRRVIMPQTGPRPVYTAPPPSASPVTPRPSGGGIQRGKPIFDRRPTGNSPGGPGGPGGGYGQRPSGPGGRRPMHPTRNQPGGGPPGGRPGFNNGPRPGFGQRPGGFGQRPGMGAPGLVPPPGDTPGRPQRPGAGQKRGGRSNQYPKSKEGPMKGFAPPSRFGGAQIPTEPLPITRTITVTEGISVKDLAEKLGVRGKDLIATLLMRGVFVTVNQSLDGELVKDVARQFGADTTVISFEDQMANEAFENLLSQENPDELELSRPPVVTVMGHVDHGKTSLLDAIRETDVAGGEAGGITQHIGAYKVRINKEDSPAFGREIVFLDTPGHEAFTRMRARGAKVTDIVVIVVAADDGVMPQTLEAVDHAKAANVPIIVAVNKIDKPEAQPDRVKKQLGDRGLVPEDWGGSTVFVDVSAKKRQNLDLLLEMICLVADLGNLKATPGRSAVGTVIEAKLDRGRGAVASVLVQNGTLRAQDSFIVGNTFGKIRAMFDDRGRAIEEAGPSTPVEILGLENMPDAGDTFLVVADRDKAKGIAQYRQMKEREVQLAKSSRVSLEGLAEQIKQAGMKELPLILKGDVTGSVEVLADSLQKMSTEKVRIKVIHSGVGAITESDVLLASASNAIIIGFNVKPDRKSADLAEQENVEIRLHTIIYELQEEITKAMLGLLDPVFKESYLGRAEVLNVFKIPKIGTIAGCRVLDGVLRRDSEIRLMRGGEQVFKGKLTSLKRFKDDAKEVTNGMECGVGLNTSDIQVGDTVEAFTMERVAAELTAQ</sequence>
<evidence type="ECO:0000250" key="1"/>
<evidence type="ECO:0000255" key="2">
    <source>
        <dbReference type="HAMAP-Rule" id="MF_00100"/>
    </source>
</evidence>
<evidence type="ECO:0000256" key="3">
    <source>
        <dbReference type="SAM" id="MobiDB-lite"/>
    </source>
</evidence>
<keyword id="KW-0963">Cytoplasm</keyword>
<keyword id="KW-0342">GTP-binding</keyword>
<keyword id="KW-0396">Initiation factor</keyword>
<keyword id="KW-0547">Nucleotide-binding</keyword>
<keyword id="KW-0648">Protein biosynthesis</keyword>
<keyword id="KW-1185">Reference proteome</keyword>
<reference key="1">
    <citation type="journal article" date="2009" name="Appl. Environ. Microbiol.">
        <title>Three genomes from the phylum Acidobacteria provide insight into the lifestyles of these microorganisms in soils.</title>
        <authorList>
            <person name="Ward N.L."/>
            <person name="Challacombe J.F."/>
            <person name="Janssen P.H."/>
            <person name="Henrissat B."/>
            <person name="Coutinho P.M."/>
            <person name="Wu M."/>
            <person name="Xie G."/>
            <person name="Haft D.H."/>
            <person name="Sait M."/>
            <person name="Badger J."/>
            <person name="Barabote R.D."/>
            <person name="Bradley B."/>
            <person name="Brettin T.S."/>
            <person name="Brinkac L.M."/>
            <person name="Bruce D."/>
            <person name="Creasy T."/>
            <person name="Daugherty S.C."/>
            <person name="Davidsen T.M."/>
            <person name="DeBoy R.T."/>
            <person name="Detter J.C."/>
            <person name="Dodson R.J."/>
            <person name="Durkin A.S."/>
            <person name="Ganapathy A."/>
            <person name="Gwinn-Giglio M."/>
            <person name="Han C.S."/>
            <person name="Khouri H."/>
            <person name="Kiss H."/>
            <person name="Kothari S.P."/>
            <person name="Madupu R."/>
            <person name="Nelson K.E."/>
            <person name="Nelson W.C."/>
            <person name="Paulsen I."/>
            <person name="Penn K."/>
            <person name="Ren Q."/>
            <person name="Rosovitz M.J."/>
            <person name="Selengut J.D."/>
            <person name="Shrivastava S."/>
            <person name="Sullivan S.A."/>
            <person name="Tapia R."/>
            <person name="Thompson L.S."/>
            <person name="Watkins K.L."/>
            <person name="Yang Q."/>
            <person name="Yu C."/>
            <person name="Zafar N."/>
            <person name="Zhou L."/>
            <person name="Kuske C.R."/>
        </authorList>
    </citation>
    <scope>NUCLEOTIDE SEQUENCE [LARGE SCALE GENOMIC DNA]</scope>
    <source>
        <strain>ATCC 51196 / DSM 11244 / BCRC 80197 / JCM 7670 / NBRC 15755 / NCIMB 13165 / 161</strain>
    </source>
</reference>
<gene>
    <name evidence="2" type="primary">infB</name>
    <name type="ordered locus">ACP_3327</name>
</gene>
<name>IF2_ACIC5</name>
<organism>
    <name type="scientific">Acidobacterium capsulatum (strain ATCC 51196 / DSM 11244 / BCRC 80197 / JCM 7670 / NBRC 15755 / NCIMB 13165 / 161)</name>
    <dbReference type="NCBI Taxonomy" id="240015"/>
    <lineage>
        <taxon>Bacteria</taxon>
        <taxon>Pseudomonadati</taxon>
        <taxon>Acidobacteriota</taxon>
        <taxon>Terriglobia</taxon>
        <taxon>Terriglobales</taxon>
        <taxon>Acidobacteriaceae</taxon>
        <taxon>Acidobacterium</taxon>
    </lineage>
</organism>
<protein>
    <recommendedName>
        <fullName evidence="2">Translation initiation factor IF-2</fullName>
    </recommendedName>
</protein>